<gene>
    <name type="primary">Stard10</name>
    <name type="synonym">Pctpl</name>
    <name type="synonym">Sdccag28</name>
    <name type="synonym">Sdccagg28</name>
</gene>
<accession>Q9JMD3</accession>
<sequence>MEKPAASTEPQGSRPALGRESVQVPDDQDFRSFRSECEAEVGWNLTYSKAGVSVWVQAVEMDRTLHKIKCRMECCDVPAETLYDVLHDIEYRKKWDSNVIETFDIARLTVNADVGYYSWRCPKPLKNRDVITLRSWLPMGADYIIMNYSVKHPKYPPRKDLVRAVSIQTGYLIQSTGPKSCVITYLAQVDPKGSLPKWVVNKSSQFLAPKAMKKMYKACIKYPEWKQKHQPHFKPWLHPEQSPLPSLALSELSVQHADSLENIDESAVTESREERAGGAGGEGSDDDTSLT</sequence>
<evidence type="ECO:0000250" key="1"/>
<evidence type="ECO:0000250" key="2">
    <source>
        <dbReference type="UniProtKB" id="Q9Y365"/>
    </source>
</evidence>
<evidence type="ECO:0000255" key="3">
    <source>
        <dbReference type="PROSITE-ProRule" id="PRU00197"/>
    </source>
</evidence>
<evidence type="ECO:0000256" key="4">
    <source>
        <dbReference type="SAM" id="MobiDB-lite"/>
    </source>
</evidence>
<evidence type="ECO:0000269" key="5">
    <source>
    </source>
</evidence>
<evidence type="ECO:0007744" key="6">
    <source>
    </source>
</evidence>
<evidence type="ECO:0007744" key="7">
    <source>
    </source>
</evidence>
<dbReference type="EMBL" id="AB031550">
    <property type="protein sequence ID" value="BAA92233.1"/>
    <property type="molecule type" value="mRNA"/>
</dbReference>
<dbReference type="CCDS" id="CCDS21509.1"/>
<dbReference type="RefSeq" id="NP_064374.1">
    <property type="nucleotide sequence ID" value="NM_019990.5"/>
</dbReference>
<dbReference type="RefSeq" id="XP_030098667.1">
    <property type="nucleotide sequence ID" value="XM_030242807.1"/>
</dbReference>
<dbReference type="RefSeq" id="XP_036009160.1">
    <property type="nucleotide sequence ID" value="XM_036153267.1"/>
</dbReference>
<dbReference type="SMR" id="Q9JMD3"/>
<dbReference type="BioGRID" id="207773">
    <property type="interactions" value="1"/>
</dbReference>
<dbReference type="FunCoup" id="Q9JMD3">
    <property type="interactions" value="32"/>
</dbReference>
<dbReference type="STRING" id="10090.ENSMUSP00000032927"/>
<dbReference type="GlyGen" id="Q9JMD3">
    <property type="glycosylation" value="1 site, 1 O-linked glycan (1 site)"/>
</dbReference>
<dbReference type="iPTMnet" id="Q9JMD3"/>
<dbReference type="PhosphoSitePlus" id="Q9JMD3"/>
<dbReference type="jPOST" id="Q9JMD3"/>
<dbReference type="PaxDb" id="10090-ENSMUSP00000032927"/>
<dbReference type="ProteomicsDB" id="257442"/>
<dbReference type="Pumba" id="Q9JMD3"/>
<dbReference type="Antibodypedia" id="7866">
    <property type="antibodies" value="146 antibodies from 26 providers"/>
</dbReference>
<dbReference type="DNASU" id="56018"/>
<dbReference type="Ensembl" id="ENSMUST00000032927.14">
    <property type="protein sequence ID" value="ENSMUSP00000032927.8"/>
    <property type="gene ID" value="ENSMUSG00000030688.16"/>
</dbReference>
<dbReference type="Ensembl" id="ENSMUST00000164479.9">
    <property type="protein sequence ID" value="ENSMUSP00000133002.3"/>
    <property type="gene ID" value="ENSMUSG00000030688.16"/>
</dbReference>
<dbReference type="Ensembl" id="ENSMUST00000210192.2">
    <property type="protein sequence ID" value="ENSMUSP00000148114.2"/>
    <property type="gene ID" value="ENSMUSG00000030688.16"/>
</dbReference>
<dbReference type="GeneID" id="56018"/>
<dbReference type="KEGG" id="mmu:56018"/>
<dbReference type="UCSC" id="uc009ioi.1">
    <property type="organism name" value="mouse"/>
</dbReference>
<dbReference type="AGR" id="MGI:1860093"/>
<dbReference type="CTD" id="10809"/>
<dbReference type="MGI" id="MGI:1860093">
    <property type="gene designation" value="Stard10"/>
</dbReference>
<dbReference type="VEuPathDB" id="HostDB:ENSMUSG00000030688"/>
<dbReference type="eggNOG" id="KOG2761">
    <property type="taxonomic scope" value="Eukaryota"/>
</dbReference>
<dbReference type="GeneTree" id="ENSGT00510000047611"/>
<dbReference type="InParanoid" id="Q9JMD3"/>
<dbReference type="OMA" id="CRMECKD"/>
<dbReference type="PhylomeDB" id="Q9JMD3"/>
<dbReference type="TreeFam" id="TF354285"/>
<dbReference type="Reactome" id="R-MMU-1483191">
    <property type="pathway name" value="Synthesis of PC"/>
</dbReference>
<dbReference type="BioGRID-ORCS" id="56018">
    <property type="hits" value="4 hits in 80 CRISPR screens"/>
</dbReference>
<dbReference type="ChiTaRS" id="Stard10">
    <property type="organism name" value="mouse"/>
</dbReference>
<dbReference type="PRO" id="PR:Q9JMD3"/>
<dbReference type="Proteomes" id="UP000000589">
    <property type="component" value="Chromosome 7"/>
</dbReference>
<dbReference type="RNAct" id="Q9JMD3">
    <property type="molecule type" value="protein"/>
</dbReference>
<dbReference type="Bgee" id="ENSMUSG00000030688">
    <property type="expression patterns" value="Expressed in left lobe of liver and 260 other cell types or tissues"/>
</dbReference>
<dbReference type="ExpressionAtlas" id="Q9JMD3">
    <property type="expression patterns" value="baseline and differential"/>
</dbReference>
<dbReference type="GO" id="GO:0005829">
    <property type="term" value="C:cytosol"/>
    <property type="evidence" value="ECO:0000314"/>
    <property type="project" value="MGI"/>
</dbReference>
<dbReference type="GO" id="GO:0046581">
    <property type="term" value="C:intercellular canaliculus"/>
    <property type="evidence" value="ECO:0000314"/>
    <property type="project" value="MGI"/>
</dbReference>
<dbReference type="GO" id="GO:0016020">
    <property type="term" value="C:membrane"/>
    <property type="evidence" value="ECO:0000314"/>
    <property type="project" value="MGI"/>
</dbReference>
<dbReference type="GO" id="GO:0005902">
    <property type="term" value="C:microvillus"/>
    <property type="evidence" value="ECO:0000314"/>
    <property type="project" value="MGI"/>
</dbReference>
<dbReference type="GO" id="GO:0031514">
    <property type="term" value="C:motile cilium"/>
    <property type="evidence" value="ECO:0007669"/>
    <property type="project" value="UniProtKB-SubCell"/>
</dbReference>
<dbReference type="GO" id="GO:0008289">
    <property type="term" value="F:lipid binding"/>
    <property type="evidence" value="ECO:0007669"/>
    <property type="project" value="UniProtKB-KW"/>
</dbReference>
<dbReference type="GO" id="GO:0032782">
    <property type="term" value="P:bile acid secretion"/>
    <property type="evidence" value="ECO:0000315"/>
    <property type="project" value="MGI"/>
</dbReference>
<dbReference type="GO" id="GO:0006869">
    <property type="term" value="P:lipid transport"/>
    <property type="evidence" value="ECO:0007669"/>
    <property type="project" value="UniProtKB-KW"/>
</dbReference>
<dbReference type="GO" id="GO:0035360">
    <property type="term" value="P:positive regulation of peroxisome proliferator activated receptor signaling pathway"/>
    <property type="evidence" value="ECO:0000315"/>
    <property type="project" value="MGI"/>
</dbReference>
<dbReference type="CDD" id="cd08871">
    <property type="entry name" value="START_STARD10-like"/>
    <property type="match status" value="1"/>
</dbReference>
<dbReference type="FunFam" id="3.30.530.20:FF:000008">
    <property type="entry name" value="START domain containing 10"/>
    <property type="match status" value="1"/>
</dbReference>
<dbReference type="Gene3D" id="3.30.530.20">
    <property type="match status" value="1"/>
</dbReference>
<dbReference type="InterPro" id="IPR041951">
    <property type="entry name" value="STARD10_START"/>
</dbReference>
<dbReference type="InterPro" id="IPR023393">
    <property type="entry name" value="START-like_dom_sf"/>
</dbReference>
<dbReference type="InterPro" id="IPR002913">
    <property type="entry name" value="START_lipid-bd_dom"/>
</dbReference>
<dbReference type="InterPro" id="IPR051213">
    <property type="entry name" value="START_lipid_transfer"/>
</dbReference>
<dbReference type="PANTHER" id="PTHR19308">
    <property type="entry name" value="PHOSPHATIDYLCHOLINE TRANSFER PROTEIN"/>
    <property type="match status" value="1"/>
</dbReference>
<dbReference type="PANTHER" id="PTHR19308:SF7">
    <property type="entry name" value="START DOMAIN-CONTAINING PROTEIN 10"/>
    <property type="match status" value="1"/>
</dbReference>
<dbReference type="Pfam" id="PF01852">
    <property type="entry name" value="START"/>
    <property type="match status" value="1"/>
</dbReference>
<dbReference type="SMART" id="SM00234">
    <property type="entry name" value="START"/>
    <property type="match status" value="1"/>
</dbReference>
<dbReference type="SUPFAM" id="SSF55961">
    <property type="entry name" value="Bet v1-like"/>
    <property type="match status" value="1"/>
</dbReference>
<dbReference type="PROSITE" id="PS50848">
    <property type="entry name" value="START"/>
    <property type="match status" value="1"/>
</dbReference>
<protein>
    <recommendedName>
        <fullName>START domain-containing protein 10</fullName>
        <shortName>StARD10</shortName>
    </recommendedName>
    <alternativeName>
        <fullName>PCTP-like protein</fullName>
        <shortName>PCTP-L</shortName>
    </alternativeName>
    <alternativeName>
        <fullName>Serologically defined colon cancer antigen 28 homolog</fullName>
    </alternativeName>
    <alternativeName>
        <fullName>StAR-related lipid transfer protein 10</fullName>
    </alternativeName>
</protein>
<proteinExistence type="evidence at protein level"/>
<keyword id="KW-0007">Acetylation</keyword>
<keyword id="KW-0966">Cell projection</keyword>
<keyword id="KW-0969">Cilium</keyword>
<keyword id="KW-0963">Cytoplasm</keyword>
<keyword id="KW-0282">Flagellum</keyword>
<keyword id="KW-0445">Lipid transport</keyword>
<keyword id="KW-0446">Lipid-binding</keyword>
<keyword id="KW-0472">Membrane</keyword>
<keyword id="KW-0597">Phosphoprotein</keyword>
<keyword id="KW-1185">Reference proteome</keyword>
<keyword id="KW-0813">Transport</keyword>
<comment type="function">
    <text evidence="1 5">Phospholipid transfer protein that preferentially selects lipid species containing a palmitoyl or stearoyl chain on the sn-1 and an unsaturated fatty acyl chain (18:1 or 18:2) on the sn-2 position. Able to transfer phosphatidylcholine (PC) and phosphatidyetanolamline (PE) between membranes (By similarity). May play metabolic roles in sperm maturation or fertilization.</text>
</comment>
<comment type="subcellular location">
    <subcellularLocation>
        <location evidence="5">Cell projection</location>
        <location evidence="5">Cilium</location>
        <location evidence="5">Flagellum</location>
    </subcellularLocation>
    <subcellularLocation>
        <location evidence="1">Cytoplasm</location>
    </subcellularLocation>
    <subcellularLocation>
        <location evidence="1">Membrane</location>
    </subcellularLocation>
    <text evidence="1">Mainly cytosolic (By similarity). In testis was predominantly detected at the flagella of elongated spermatids, with a strong signal also found at the tail of epididymal sperm.</text>
</comment>
<comment type="tissue specificity">
    <text>Testis, kidney, liver, and intestine with the highest level in the testis.</text>
</comment>
<comment type="developmental stage">
    <text>During male germ cell development, it was detected first in the 23-day-old mouse testis, and the signal increased with age.</text>
</comment>
<comment type="PTM">
    <text evidence="1">Phosphorylation at Ser-284 by CK2 negatively regulates lipid transfer activity, possibly by decreasing membrane association.</text>
</comment>
<feature type="chain" id="PRO_0000220662" description="START domain-containing protein 10">
    <location>
        <begin position="1"/>
        <end position="291"/>
    </location>
</feature>
<feature type="domain" description="START" evidence="3">
    <location>
        <begin position="14"/>
        <end position="224"/>
    </location>
</feature>
<feature type="region of interest" description="Disordered" evidence="4">
    <location>
        <begin position="1"/>
        <end position="23"/>
    </location>
</feature>
<feature type="region of interest" description="Disordered" evidence="4">
    <location>
        <begin position="260"/>
        <end position="291"/>
    </location>
</feature>
<feature type="modified residue" description="N-acetylmethionine" evidence="2">
    <location>
        <position position="1"/>
    </location>
</feature>
<feature type="modified residue" description="N6-succinyllysine" evidence="7">
    <location>
        <position position="94"/>
    </location>
</feature>
<feature type="modified residue" description="N6-succinyllysine" evidence="7">
    <location>
        <position position="197"/>
    </location>
</feature>
<feature type="modified residue" description="N6-succinyllysine" evidence="7">
    <location>
        <position position="202"/>
    </location>
</feature>
<feature type="modified residue" description="Phosphoserine" evidence="2">
    <location>
        <position position="253"/>
    </location>
</feature>
<feature type="modified residue" description="Phosphoserine" evidence="2">
    <location>
        <position position="259"/>
    </location>
</feature>
<feature type="modified residue" description="Phosphoserine" evidence="6">
    <location>
        <position position="284"/>
    </location>
</feature>
<feature type="modified residue" description="Phosphoserine" evidence="6">
    <location>
        <position position="289"/>
    </location>
</feature>
<organism>
    <name type="scientific">Mus musculus</name>
    <name type="common">Mouse</name>
    <dbReference type="NCBI Taxonomy" id="10090"/>
    <lineage>
        <taxon>Eukaryota</taxon>
        <taxon>Metazoa</taxon>
        <taxon>Chordata</taxon>
        <taxon>Craniata</taxon>
        <taxon>Vertebrata</taxon>
        <taxon>Euteleostomi</taxon>
        <taxon>Mammalia</taxon>
        <taxon>Eutheria</taxon>
        <taxon>Euarchontoglires</taxon>
        <taxon>Glires</taxon>
        <taxon>Rodentia</taxon>
        <taxon>Myomorpha</taxon>
        <taxon>Muroidea</taxon>
        <taxon>Muridae</taxon>
        <taxon>Murinae</taxon>
        <taxon>Mus</taxon>
        <taxon>Mus</taxon>
    </lineage>
</organism>
<reference key="1">
    <citation type="journal article" date="2000" name="Biol. Reprod.">
        <title>Molecular cloning and characterization of phosphatidylcholine transfer protein-like protein gene expressed in murine haploid germ cells.</title>
        <authorList>
            <person name="Yamanaka M."/>
            <person name="Koga M."/>
            <person name="Tanaka H."/>
            <person name="Nakamura Y."/>
            <person name="Ohta H."/>
            <person name="Yomogida K."/>
            <person name="Tsuchida J."/>
            <person name="Iguchi N."/>
            <person name="Nojima H."/>
            <person name="Nozaki M."/>
            <person name="Matsumiya K."/>
            <person name="Okuyama A."/>
            <person name="Toshimori K."/>
            <person name="Nishimune Y."/>
        </authorList>
    </citation>
    <scope>NUCLEOTIDE SEQUENCE [MRNA]</scope>
    <scope>FUNCTION</scope>
    <scope>SUBCELLULAR LOCATION</scope>
    <source>
        <tissue>Testis</tissue>
    </source>
</reference>
<reference key="2">
    <citation type="journal article" date="2010" name="Cell">
        <title>A tissue-specific atlas of mouse protein phosphorylation and expression.</title>
        <authorList>
            <person name="Huttlin E.L."/>
            <person name="Jedrychowski M.P."/>
            <person name="Elias J.E."/>
            <person name="Goswami T."/>
            <person name="Rad R."/>
            <person name="Beausoleil S.A."/>
            <person name="Villen J."/>
            <person name="Haas W."/>
            <person name="Sowa M.E."/>
            <person name="Gygi S.P."/>
        </authorList>
    </citation>
    <scope>PHOSPHORYLATION [LARGE SCALE ANALYSIS] AT SER-284 AND SER-289</scope>
    <scope>IDENTIFICATION BY MASS SPECTROMETRY [LARGE SCALE ANALYSIS]</scope>
    <source>
        <tissue>Brain</tissue>
        <tissue>Heart</tissue>
        <tissue>Kidney</tissue>
        <tissue>Liver</tissue>
        <tissue>Lung</tissue>
        <tissue>Pancreas</tissue>
        <tissue>Spleen</tissue>
    </source>
</reference>
<reference key="3">
    <citation type="journal article" date="2013" name="Mol. Cell">
        <title>SIRT5-mediated lysine desuccinylation impacts diverse metabolic pathways.</title>
        <authorList>
            <person name="Park J."/>
            <person name="Chen Y."/>
            <person name="Tishkoff D.X."/>
            <person name="Peng C."/>
            <person name="Tan M."/>
            <person name="Dai L."/>
            <person name="Xie Z."/>
            <person name="Zhang Y."/>
            <person name="Zwaans B.M."/>
            <person name="Skinner M.E."/>
            <person name="Lombard D.B."/>
            <person name="Zhao Y."/>
        </authorList>
    </citation>
    <scope>SUCCINYLATION [LARGE SCALE ANALYSIS] AT LYS-94; LYS-197 AND LYS-202</scope>
    <scope>IDENTIFICATION BY MASS SPECTROMETRY [LARGE SCALE ANALYSIS]</scope>
    <source>
        <tissue>Liver</tissue>
    </source>
</reference>
<name>STA10_MOUSE</name>